<comment type="function">
    <text evidence="1">With S4 and S12 plays an important role in translational accuracy.</text>
</comment>
<comment type="function">
    <text evidence="1">Located at the back of the 30S subunit body where it stabilizes the conformation of the head with respect to the body.</text>
</comment>
<comment type="subunit">
    <text evidence="1">Part of the 30S ribosomal subunit. Contacts proteins S4 and S8.</text>
</comment>
<comment type="domain">
    <text>The N-terminal domain interacts with the head of the 30S subunit; the C-terminal domain interacts with the body and contacts protein S4. The interaction surface between S4 and S5 is involved in control of translational fidelity.</text>
</comment>
<comment type="similarity">
    <text evidence="1">Belongs to the universal ribosomal protein uS5 family.</text>
</comment>
<name>RS5_CAMC5</name>
<gene>
    <name evidence="1" type="primary">rpsE</name>
    <name type="ordered locus">Ccur92_18330</name>
    <name type="ORF">CCV52592_1016</name>
</gene>
<proteinExistence type="inferred from homology"/>
<evidence type="ECO:0000255" key="1">
    <source>
        <dbReference type="HAMAP-Rule" id="MF_01307"/>
    </source>
</evidence>
<evidence type="ECO:0000305" key="2"/>
<protein>
    <recommendedName>
        <fullName evidence="1">Small ribosomal subunit protein uS5</fullName>
    </recommendedName>
    <alternativeName>
        <fullName evidence="2">30S ribosomal protein S5</fullName>
    </alternativeName>
</protein>
<sequence length="147" mass="15889">MEKYNREEFEEVIVDIGRVTKVVKGGRRFRFTALVVVGNRNGLVGFGYGKAKEVPDAMRKAIDDAFKNIIHVKLKGSTIPHDVEVKYNASRILLRPASEGTGVIAGGGARPIIELAGIKDILTKSLGSNNSANVVRATIKALSLLKS</sequence>
<reference key="1">
    <citation type="submission" date="2007-07" db="EMBL/GenBank/DDBJ databases">
        <title>Genome sequence of Campylobacter curvus 525.92 isolated from human feces.</title>
        <authorList>
            <person name="Fouts D.E."/>
            <person name="Mongodin E.F."/>
            <person name="Puiu D."/>
            <person name="Sebastian Y."/>
            <person name="Miller W.G."/>
            <person name="Mandrell R.E."/>
            <person name="Lastovica A.J."/>
            <person name="Nelson K.E."/>
        </authorList>
    </citation>
    <scope>NUCLEOTIDE SEQUENCE [LARGE SCALE GENOMIC DNA]</scope>
    <source>
        <strain>525.92</strain>
    </source>
</reference>
<dbReference type="EMBL" id="CP000767">
    <property type="protein sequence ID" value="EAT99612.2"/>
    <property type="molecule type" value="Genomic_DNA"/>
</dbReference>
<dbReference type="RefSeq" id="WP_009649732.1">
    <property type="nucleotide sequence ID" value="NC_009715.2"/>
</dbReference>
<dbReference type="SMR" id="A7H0Z5"/>
<dbReference type="STRING" id="360105.CCV52592_1016"/>
<dbReference type="GeneID" id="61003081"/>
<dbReference type="KEGG" id="ccv:CCV52592_1016"/>
<dbReference type="HOGENOM" id="CLU_065898_2_2_7"/>
<dbReference type="OrthoDB" id="9809045at2"/>
<dbReference type="Proteomes" id="UP000006380">
    <property type="component" value="Chromosome"/>
</dbReference>
<dbReference type="GO" id="GO:0015935">
    <property type="term" value="C:small ribosomal subunit"/>
    <property type="evidence" value="ECO:0007669"/>
    <property type="project" value="InterPro"/>
</dbReference>
<dbReference type="GO" id="GO:0019843">
    <property type="term" value="F:rRNA binding"/>
    <property type="evidence" value="ECO:0007669"/>
    <property type="project" value="UniProtKB-UniRule"/>
</dbReference>
<dbReference type="GO" id="GO:0003735">
    <property type="term" value="F:structural constituent of ribosome"/>
    <property type="evidence" value="ECO:0007669"/>
    <property type="project" value="InterPro"/>
</dbReference>
<dbReference type="GO" id="GO:0006412">
    <property type="term" value="P:translation"/>
    <property type="evidence" value="ECO:0007669"/>
    <property type="project" value="UniProtKB-UniRule"/>
</dbReference>
<dbReference type="FunFam" id="3.30.160.20:FF:000001">
    <property type="entry name" value="30S ribosomal protein S5"/>
    <property type="match status" value="1"/>
</dbReference>
<dbReference type="FunFam" id="3.30.230.10:FF:000002">
    <property type="entry name" value="30S ribosomal protein S5"/>
    <property type="match status" value="1"/>
</dbReference>
<dbReference type="Gene3D" id="3.30.160.20">
    <property type="match status" value="1"/>
</dbReference>
<dbReference type="Gene3D" id="3.30.230.10">
    <property type="match status" value="1"/>
</dbReference>
<dbReference type="HAMAP" id="MF_01307_B">
    <property type="entry name" value="Ribosomal_uS5_B"/>
    <property type="match status" value="1"/>
</dbReference>
<dbReference type="InterPro" id="IPR020568">
    <property type="entry name" value="Ribosomal_Su5_D2-typ_SF"/>
</dbReference>
<dbReference type="InterPro" id="IPR000851">
    <property type="entry name" value="Ribosomal_uS5"/>
</dbReference>
<dbReference type="InterPro" id="IPR005712">
    <property type="entry name" value="Ribosomal_uS5_bac-type"/>
</dbReference>
<dbReference type="InterPro" id="IPR005324">
    <property type="entry name" value="Ribosomal_uS5_C"/>
</dbReference>
<dbReference type="InterPro" id="IPR013810">
    <property type="entry name" value="Ribosomal_uS5_N"/>
</dbReference>
<dbReference type="InterPro" id="IPR018192">
    <property type="entry name" value="Ribosomal_uS5_N_CS"/>
</dbReference>
<dbReference type="InterPro" id="IPR014721">
    <property type="entry name" value="Ribsml_uS5_D2-typ_fold_subgr"/>
</dbReference>
<dbReference type="NCBIfam" id="TIGR01021">
    <property type="entry name" value="rpsE_bact"/>
    <property type="match status" value="1"/>
</dbReference>
<dbReference type="PANTHER" id="PTHR48277">
    <property type="entry name" value="MITOCHONDRIAL RIBOSOMAL PROTEIN S5"/>
    <property type="match status" value="1"/>
</dbReference>
<dbReference type="PANTHER" id="PTHR48277:SF1">
    <property type="entry name" value="MITOCHONDRIAL RIBOSOMAL PROTEIN S5"/>
    <property type="match status" value="1"/>
</dbReference>
<dbReference type="Pfam" id="PF00333">
    <property type="entry name" value="Ribosomal_S5"/>
    <property type="match status" value="1"/>
</dbReference>
<dbReference type="Pfam" id="PF03719">
    <property type="entry name" value="Ribosomal_S5_C"/>
    <property type="match status" value="1"/>
</dbReference>
<dbReference type="SUPFAM" id="SSF54768">
    <property type="entry name" value="dsRNA-binding domain-like"/>
    <property type="match status" value="1"/>
</dbReference>
<dbReference type="SUPFAM" id="SSF54211">
    <property type="entry name" value="Ribosomal protein S5 domain 2-like"/>
    <property type="match status" value="1"/>
</dbReference>
<dbReference type="PROSITE" id="PS00585">
    <property type="entry name" value="RIBOSOMAL_S5"/>
    <property type="match status" value="1"/>
</dbReference>
<dbReference type="PROSITE" id="PS50881">
    <property type="entry name" value="S5_DSRBD"/>
    <property type="match status" value="1"/>
</dbReference>
<accession>A7H0Z5</accession>
<keyword id="KW-1185">Reference proteome</keyword>
<keyword id="KW-0687">Ribonucleoprotein</keyword>
<keyword id="KW-0689">Ribosomal protein</keyword>
<keyword id="KW-0694">RNA-binding</keyword>
<keyword id="KW-0699">rRNA-binding</keyword>
<feature type="chain" id="PRO_0000323097" description="Small ribosomal subunit protein uS5">
    <location>
        <begin position="1"/>
        <end position="147"/>
    </location>
</feature>
<feature type="domain" description="S5 DRBM" evidence="1">
    <location>
        <begin position="9"/>
        <end position="72"/>
    </location>
</feature>
<organism>
    <name type="scientific">Campylobacter curvus (strain 525.92)</name>
    <dbReference type="NCBI Taxonomy" id="360105"/>
    <lineage>
        <taxon>Bacteria</taxon>
        <taxon>Pseudomonadati</taxon>
        <taxon>Campylobacterota</taxon>
        <taxon>Epsilonproteobacteria</taxon>
        <taxon>Campylobacterales</taxon>
        <taxon>Campylobacteraceae</taxon>
        <taxon>Campylobacter</taxon>
    </lineage>
</organism>